<evidence type="ECO:0000255" key="1">
    <source>
        <dbReference type="HAMAP-Rule" id="MF_00302"/>
    </source>
</evidence>
<name>CLPS_SYNAS</name>
<gene>
    <name evidence="1" type="primary">clpS</name>
    <name type="ordered locus">SYNAS_01760</name>
    <name type="ORF">SYN_02377</name>
</gene>
<keyword id="KW-1185">Reference proteome</keyword>
<proteinExistence type="inferred from homology"/>
<protein>
    <recommendedName>
        <fullName evidence="1">ATP-dependent Clp protease adapter protein ClpS</fullName>
    </recommendedName>
</protein>
<comment type="function">
    <text evidence="1">Involved in the modulation of the specificity of the ClpAP-mediated ATP-dependent protein degradation.</text>
</comment>
<comment type="subunit">
    <text evidence="1">Binds to the N-terminal domain of the chaperone ClpA.</text>
</comment>
<comment type="similarity">
    <text evidence="1">Belongs to the ClpS family.</text>
</comment>
<feature type="chain" id="PRO_1000115481" description="ATP-dependent Clp protease adapter protein ClpS">
    <location>
        <begin position="1"/>
        <end position="107"/>
    </location>
</feature>
<dbReference type="EMBL" id="CP000252">
    <property type="protein sequence ID" value="ABC76055.1"/>
    <property type="molecule type" value="Genomic_DNA"/>
</dbReference>
<dbReference type="RefSeq" id="WP_011416090.1">
    <property type="nucleotide sequence ID" value="NC_007759.1"/>
</dbReference>
<dbReference type="SMR" id="Q2LQK8"/>
<dbReference type="FunCoup" id="Q2LQK8">
    <property type="interactions" value="172"/>
</dbReference>
<dbReference type="STRING" id="56780.SYN_02377"/>
<dbReference type="KEGG" id="sat:SYN_02377"/>
<dbReference type="eggNOG" id="COG2127">
    <property type="taxonomic scope" value="Bacteria"/>
</dbReference>
<dbReference type="HOGENOM" id="CLU_134358_1_0_7"/>
<dbReference type="InParanoid" id="Q2LQK8"/>
<dbReference type="OrthoDB" id="9796121at2"/>
<dbReference type="Proteomes" id="UP000001933">
    <property type="component" value="Chromosome"/>
</dbReference>
<dbReference type="GO" id="GO:0030163">
    <property type="term" value="P:protein catabolic process"/>
    <property type="evidence" value="ECO:0007669"/>
    <property type="project" value="InterPro"/>
</dbReference>
<dbReference type="GO" id="GO:0006508">
    <property type="term" value="P:proteolysis"/>
    <property type="evidence" value="ECO:0007669"/>
    <property type="project" value="UniProtKB-UniRule"/>
</dbReference>
<dbReference type="FunFam" id="3.30.1390.10:FF:000002">
    <property type="entry name" value="ATP-dependent Clp protease adapter protein ClpS"/>
    <property type="match status" value="1"/>
</dbReference>
<dbReference type="Gene3D" id="3.30.1390.10">
    <property type="match status" value="1"/>
</dbReference>
<dbReference type="HAMAP" id="MF_00302">
    <property type="entry name" value="ClpS"/>
    <property type="match status" value="1"/>
</dbReference>
<dbReference type="InterPro" id="IPR022935">
    <property type="entry name" value="ClpS"/>
</dbReference>
<dbReference type="InterPro" id="IPR003769">
    <property type="entry name" value="ClpS_core"/>
</dbReference>
<dbReference type="InterPro" id="IPR014719">
    <property type="entry name" value="Ribosomal_bL12_C/ClpS-like"/>
</dbReference>
<dbReference type="NCBIfam" id="NF000672">
    <property type="entry name" value="PRK00033.1-5"/>
    <property type="match status" value="1"/>
</dbReference>
<dbReference type="PANTHER" id="PTHR33473:SF19">
    <property type="entry name" value="ATP-DEPENDENT CLP PROTEASE ADAPTER PROTEIN CLPS"/>
    <property type="match status" value="1"/>
</dbReference>
<dbReference type="PANTHER" id="PTHR33473">
    <property type="entry name" value="ATP-DEPENDENT CLP PROTEASE ADAPTER PROTEIN CLPS1, CHLOROPLASTIC"/>
    <property type="match status" value="1"/>
</dbReference>
<dbReference type="Pfam" id="PF02617">
    <property type="entry name" value="ClpS"/>
    <property type="match status" value="1"/>
</dbReference>
<dbReference type="SUPFAM" id="SSF54736">
    <property type="entry name" value="ClpS-like"/>
    <property type="match status" value="1"/>
</dbReference>
<accession>Q2LQK8</accession>
<sequence length="107" mass="12654">MQNETDVIKNFDQELNIEWEDKVMEPRMYRVILHNDHYTTMDFVVQILMTIFHKPAAQATRIMLDVHRKGQGVCGVYTYDIASTKIAQVHFMARQNEYPLRCSMDEV</sequence>
<organism>
    <name type="scientific">Syntrophus aciditrophicus (strain SB)</name>
    <dbReference type="NCBI Taxonomy" id="56780"/>
    <lineage>
        <taxon>Bacteria</taxon>
        <taxon>Pseudomonadati</taxon>
        <taxon>Thermodesulfobacteriota</taxon>
        <taxon>Syntrophia</taxon>
        <taxon>Syntrophales</taxon>
        <taxon>Syntrophaceae</taxon>
        <taxon>Syntrophus</taxon>
    </lineage>
</organism>
<reference key="1">
    <citation type="journal article" date="2007" name="Proc. Natl. Acad. Sci. U.S.A.">
        <title>The genome of Syntrophus aciditrophicus: life at the thermodynamic limit of microbial growth.</title>
        <authorList>
            <person name="McInerney M.J."/>
            <person name="Rohlin L."/>
            <person name="Mouttaki H."/>
            <person name="Kim U."/>
            <person name="Krupp R.S."/>
            <person name="Rios-Hernandez L."/>
            <person name="Sieber J."/>
            <person name="Struchtemeyer C.G."/>
            <person name="Bhattacharyya A."/>
            <person name="Campbell J.W."/>
            <person name="Gunsalus R.P."/>
        </authorList>
    </citation>
    <scope>NUCLEOTIDE SEQUENCE [LARGE SCALE GENOMIC DNA]</scope>
    <source>
        <strain>SB</strain>
    </source>
</reference>